<keyword id="KW-0077">Bacteriochlorophyll biosynthesis</keyword>
<keyword id="KW-0149">Chlorophyll biosynthesis</keyword>
<keyword id="KW-0602">Photosynthesis</keyword>
<keyword id="KW-1185">Reference proteome</keyword>
<gene>
    <name type="primary">bchJ</name>
    <name type="ordered locus">RHOS4_18850</name>
    <name type="ORF">RSP_0280</name>
</gene>
<reference key="1">
    <citation type="journal article" date="1999" name="Photosyn. Res.">
        <title>The photosynthesis gene cluster of Rhodobacter sphaeroides.</title>
        <authorList>
            <person name="Naylor G.W."/>
            <person name="Addlesee H.A."/>
            <person name="Gibson L.C.D."/>
            <person name="Hunter C.N."/>
        </authorList>
    </citation>
    <scope>NUCLEOTIDE SEQUENCE [GENOMIC DNA]</scope>
</reference>
<reference key="2">
    <citation type="journal article" date="2000" name="Nucleic Acids Res.">
        <title>DNA sequence analysis of the photosynthesis region of Rhodobacter sphaeroides 2.4.1.</title>
        <authorList>
            <person name="Choudhary M."/>
            <person name="Kaplan S."/>
        </authorList>
    </citation>
    <scope>NUCLEOTIDE SEQUENCE [GENOMIC DNA]</scope>
</reference>
<reference key="3">
    <citation type="submission" date="2005-09" db="EMBL/GenBank/DDBJ databases">
        <title>Complete sequence of chromosome 1 of Rhodobacter sphaeroides 2.4.1.</title>
        <authorList>
            <person name="Copeland A."/>
            <person name="Lucas S."/>
            <person name="Lapidus A."/>
            <person name="Barry K."/>
            <person name="Detter J.C."/>
            <person name="Glavina T."/>
            <person name="Hammon N."/>
            <person name="Israni S."/>
            <person name="Pitluck S."/>
            <person name="Richardson P."/>
            <person name="Mackenzie C."/>
            <person name="Choudhary M."/>
            <person name="Larimer F."/>
            <person name="Hauser L.J."/>
            <person name="Land M."/>
            <person name="Donohue T.J."/>
            <person name="Kaplan S."/>
        </authorList>
    </citation>
    <scope>NUCLEOTIDE SEQUENCE [LARGE SCALE GENOMIC DNA]</scope>
    <source>
        <strain>ATCC 17023 / DSM 158 / JCM 6121 / CCUG 31486 / LMG 2827 / NBRC 12203 / NCIMB 8253 / ATH 2.4.1.</strain>
    </source>
</reference>
<organism>
    <name type="scientific">Cereibacter sphaeroides (strain ATCC 17023 / DSM 158 / JCM 6121 / CCUG 31486 / LMG 2827 / NBRC 12203 / NCIMB 8253 / ATH 2.4.1.)</name>
    <name type="common">Rhodobacter sphaeroides</name>
    <dbReference type="NCBI Taxonomy" id="272943"/>
    <lineage>
        <taxon>Bacteria</taxon>
        <taxon>Pseudomonadati</taxon>
        <taxon>Pseudomonadota</taxon>
        <taxon>Alphaproteobacteria</taxon>
        <taxon>Rhodobacterales</taxon>
        <taxon>Paracoccaceae</taxon>
        <taxon>Cereibacter</taxon>
    </lineage>
</organism>
<comment type="pathway">
    <text>Porphyrin-containing compound metabolism; bacteriochlorophyll biosynthesis (light-independent).</text>
</comment>
<protein>
    <recommendedName>
        <fullName>Bacteriochlorophyll synthase 23 kDa chain</fullName>
    </recommendedName>
    <alternativeName>
        <fullName>4-vinyl reductase</fullName>
    </alternativeName>
</protein>
<sequence>MTAHDQRLTGGPAIAHRIGPNAILQLIPVLEAAFGPGAADRALAAAGVPRPGPESGMLPETQVSTLHRWLRDTHPEEAPRLLREAGLATGDYILANRIPPLAQRLIRALPAFLGARVLATAIAKHSWTFAGSGKFRVVSGRPLSFEIARNPVVAGESSDTPLCHWHAAVFERLFSRLVWPHVAVRETACCAKGAPACRFELLPKGR</sequence>
<accession>Q9Z5D7</accession>
<accession>Q3J181</accession>
<dbReference type="EMBL" id="AJ010302">
    <property type="protein sequence ID" value="CAB38730.1"/>
    <property type="molecule type" value="Genomic_DNA"/>
</dbReference>
<dbReference type="EMBL" id="AF195122">
    <property type="protein sequence ID" value="AAF24280.1"/>
    <property type="molecule type" value="Genomic_DNA"/>
</dbReference>
<dbReference type="EMBL" id="CP000143">
    <property type="protein sequence ID" value="ABA79453.1"/>
    <property type="molecule type" value="Genomic_DNA"/>
</dbReference>
<dbReference type="PIR" id="T50736">
    <property type="entry name" value="T50736"/>
</dbReference>
<dbReference type="RefSeq" id="WP_002720444.1">
    <property type="nucleotide sequence ID" value="NZ_CP030271.1"/>
</dbReference>
<dbReference type="RefSeq" id="YP_353354.1">
    <property type="nucleotide sequence ID" value="NC_007493.2"/>
</dbReference>
<dbReference type="STRING" id="272943.RSP_0280"/>
<dbReference type="EnsemblBacteria" id="ABA79453">
    <property type="protein sequence ID" value="ABA79453"/>
    <property type="gene ID" value="RSP_0280"/>
</dbReference>
<dbReference type="GeneID" id="3719192"/>
<dbReference type="KEGG" id="rsp:RSP_0280"/>
<dbReference type="PATRIC" id="fig|272943.9.peg.2223"/>
<dbReference type="eggNOG" id="COG1719">
    <property type="taxonomic scope" value="Bacteria"/>
</dbReference>
<dbReference type="OrthoDB" id="2080515at2"/>
<dbReference type="PhylomeDB" id="Q9Z5D7"/>
<dbReference type="UniPathway" id="UPA00671"/>
<dbReference type="Proteomes" id="UP000002703">
    <property type="component" value="Chromosome 1"/>
</dbReference>
<dbReference type="GO" id="GO:0036070">
    <property type="term" value="P:light-independent bacteriochlorophyll biosynthetic process"/>
    <property type="evidence" value="ECO:0007669"/>
    <property type="project" value="UniProtKB-UniPathway"/>
</dbReference>
<dbReference type="GO" id="GO:0015979">
    <property type="term" value="P:photosynthesis"/>
    <property type="evidence" value="ECO:0007669"/>
    <property type="project" value="UniProtKB-KW"/>
</dbReference>
<dbReference type="Gene3D" id="3.30.1380.20">
    <property type="entry name" value="Trafficking protein particle complex subunit 3"/>
    <property type="match status" value="1"/>
</dbReference>
<dbReference type="InterPro" id="IPR010249">
    <property type="entry name" value="BchJ"/>
</dbReference>
<dbReference type="InterPro" id="IPR024096">
    <property type="entry name" value="NO_sig/Golgi_transp_ligand-bd"/>
</dbReference>
<dbReference type="InterPro" id="IPR004096">
    <property type="entry name" value="V4R"/>
</dbReference>
<dbReference type="NCBIfam" id="TIGR02019">
    <property type="entry name" value="BchJ"/>
    <property type="match status" value="1"/>
</dbReference>
<dbReference type="PANTHER" id="PTHR35090">
    <property type="entry name" value="DNA-DIRECTED RNA POLYMERASE SUBUNIT I"/>
    <property type="match status" value="1"/>
</dbReference>
<dbReference type="PANTHER" id="PTHR35090:SF1">
    <property type="entry name" value="SLR0144 PROTEIN"/>
    <property type="match status" value="1"/>
</dbReference>
<dbReference type="Pfam" id="PF02830">
    <property type="entry name" value="V4R"/>
    <property type="match status" value="1"/>
</dbReference>
<dbReference type="SMART" id="SM00989">
    <property type="entry name" value="V4R"/>
    <property type="match status" value="1"/>
</dbReference>
<dbReference type="SUPFAM" id="SSF111126">
    <property type="entry name" value="Ligand-binding domain in the NO signalling and Golgi transport"/>
    <property type="match status" value="1"/>
</dbReference>
<feature type="chain" id="PRO_0000064882" description="Bacteriochlorophyll synthase 23 kDa chain">
    <location>
        <begin position="1"/>
        <end position="206"/>
    </location>
</feature>
<proteinExistence type="predicted"/>
<name>BCHJ_CERS4</name>